<accession>P0CP84</accession>
<accession>Q55VA8</accession>
<accession>Q5KKX7</accession>
<proteinExistence type="inferred from homology"/>
<reference key="1">
    <citation type="journal article" date="2005" name="Science">
        <title>The genome of the basidiomycetous yeast and human pathogen Cryptococcus neoformans.</title>
        <authorList>
            <person name="Loftus B.J."/>
            <person name="Fung E."/>
            <person name="Roncaglia P."/>
            <person name="Rowley D."/>
            <person name="Amedeo P."/>
            <person name="Bruno D."/>
            <person name="Vamathevan J."/>
            <person name="Miranda M."/>
            <person name="Anderson I.J."/>
            <person name="Fraser J.A."/>
            <person name="Allen J.E."/>
            <person name="Bosdet I.E."/>
            <person name="Brent M.R."/>
            <person name="Chiu R."/>
            <person name="Doering T.L."/>
            <person name="Donlin M.J."/>
            <person name="D'Souza C.A."/>
            <person name="Fox D.S."/>
            <person name="Grinberg V."/>
            <person name="Fu J."/>
            <person name="Fukushima M."/>
            <person name="Haas B.J."/>
            <person name="Huang J.C."/>
            <person name="Janbon G."/>
            <person name="Jones S.J.M."/>
            <person name="Koo H.L."/>
            <person name="Krzywinski M.I."/>
            <person name="Kwon-Chung K.J."/>
            <person name="Lengeler K.B."/>
            <person name="Maiti R."/>
            <person name="Marra M.A."/>
            <person name="Marra R.E."/>
            <person name="Mathewson C.A."/>
            <person name="Mitchell T.G."/>
            <person name="Pertea M."/>
            <person name="Riggs F.R."/>
            <person name="Salzberg S.L."/>
            <person name="Schein J.E."/>
            <person name="Shvartsbeyn A."/>
            <person name="Shin H."/>
            <person name="Shumway M."/>
            <person name="Specht C.A."/>
            <person name="Suh B.B."/>
            <person name="Tenney A."/>
            <person name="Utterback T.R."/>
            <person name="Wickes B.L."/>
            <person name="Wortman J.R."/>
            <person name="Wye N.H."/>
            <person name="Kronstad J.W."/>
            <person name="Lodge J.K."/>
            <person name="Heitman J."/>
            <person name="Davis R.W."/>
            <person name="Fraser C.M."/>
            <person name="Hyman R.W."/>
        </authorList>
    </citation>
    <scope>NUCLEOTIDE SEQUENCE [LARGE SCALE GENOMIC DNA]</scope>
    <source>
        <strain>JEC21 / ATCC MYA-565</strain>
    </source>
</reference>
<organism>
    <name type="scientific">Cryptococcus neoformans var. neoformans serotype D (strain JEC21 / ATCC MYA-565)</name>
    <name type="common">Filobasidiella neoformans</name>
    <dbReference type="NCBI Taxonomy" id="214684"/>
    <lineage>
        <taxon>Eukaryota</taxon>
        <taxon>Fungi</taxon>
        <taxon>Dikarya</taxon>
        <taxon>Basidiomycota</taxon>
        <taxon>Agaricomycotina</taxon>
        <taxon>Tremellomycetes</taxon>
        <taxon>Tremellales</taxon>
        <taxon>Cryptococcaceae</taxon>
        <taxon>Cryptococcus</taxon>
        <taxon>Cryptococcus neoformans species complex</taxon>
    </lineage>
</organism>
<gene>
    <name type="primary">CYP1</name>
    <name type="ordered locus">CNC01490</name>
</gene>
<dbReference type="EC" id="5.2.1.8"/>
<dbReference type="EMBL" id="AE017343">
    <property type="protein sequence ID" value="AAW42175.1"/>
    <property type="molecule type" value="Genomic_DNA"/>
</dbReference>
<dbReference type="RefSeq" id="XP_569482.1">
    <property type="nucleotide sequence ID" value="XM_569482.1"/>
</dbReference>
<dbReference type="SMR" id="P0CP84"/>
<dbReference type="FunCoup" id="P0CP84">
    <property type="interactions" value="564"/>
</dbReference>
<dbReference type="STRING" id="214684.P0CP84"/>
<dbReference type="PaxDb" id="214684-P0CP84"/>
<dbReference type="EnsemblFungi" id="AAW42175">
    <property type="protein sequence ID" value="AAW42175"/>
    <property type="gene ID" value="CNC01490"/>
</dbReference>
<dbReference type="VEuPathDB" id="FungiDB:CNC01490"/>
<dbReference type="eggNOG" id="KOG0881">
    <property type="taxonomic scope" value="Eukaryota"/>
</dbReference>
<dbReference type="HOGENOM" id="CLU_012062_16_3_1"/>
<dbReference type="InParanoid" id="P0CP84"/>
<dbReference type="OMA" id="ELYNDHA"/>
<dbReference type="OrthoDB" id="271386at2759"/>
<dbReference type="Proteomes" id="UP000002149">
    <property type="component" value="Chromosome 3"/>
</dbReference>
<dbReference type="GO" id="GO:0071013">
    <property type="term" value="C:catalytic step 2 spliceosome"/>
    <property type="evidence" value="ECO:0000318"/>
    <property type="project" value="GO_Central"/>
</dbReference>
<dbReference type="GO" id="GO:0071014">
    <property type="term" value="C:post-mRNA release spliceosomal complex"/>
    <property type="evidence" value="ECO:0007669"/>
    <property type="project" value="EnsemblFungi"/>
</dbReference>
<dbReference type="GO" id="GO:0000974">
    <property type="term" value="C:Prp19 complex"/>
    <property type="evidence" value="ECO:0007669"/>
    <property type="project" value="EnsemblFungi"/>
</dbReference>
<dbReference type="GO" id="GO:0003755">
    <property type="term" value="F:peptidyl-prolyl cis-trans isomerase activity"/>
    <property type="evidence" value="ECO:0000318"/>
    <property type="project" value="GO_Central"/>
</dbReference>
<dbReference type="GO" id="GO:0045292">
    <property type="term" value="P:mRNA cis splicing, via spliceosome"/>
    <property type="evidence" value="ECO:0007669"/>
    <property type="project" value="EnsemblFungi"/>
</dbReference>
<dbReference type="GO" id="GO:0000398">
    <property type="term" value="P:mRNA splicing, via spliceosome"/>
    <property type="evidence" value="ECO:0000318"/>
    <property type="project" value="GO_Central"/>
</dbReference>
<dbReference type="GO" id="GO:0006457">
    <property type="term" value="P:protein folding"/>
    <property type="evidence" value="ECO:0000318"/>
    <property type="project" value="GO_Central"/>
</dbReference>
<dbReference type="FunFam" id="2.40.100.10:FF:000008">
    <property type="entry name" value="Peptidyl-prolyl cis-trans isomerase"/>
    <property type="match status" value="1"/>
</dbReference>
<dbReference type="Gene3D" id="2.40.100.10">
    <property type="entry name" value="Cyclophilin-like"/>
    <property type="match status" value="1"/>
</dbReference>
<dbReference type="InterPro" id="IPR029000">
    <property type="entry name" value="Cyclophilin-like_dom_sf"/>
</dbReference>
<dbReference type="InterPro" id="IPR024936">
    <property type="entry name" value="Cyclophilin-type_PPIase"/>
</dbReference>
<dbReference type="InterPro" id="IPR020892">
    <property type="entry name" value="Cyclophilin-type_PPIase_CS"/>
</dbReference>
<dbReference type="InterPro" id="IPR002130">
    <property type="entry name" value="Cyclophilin-type_PPIase_dom"/>
</dbReference>
<dbReference type="InterPro" id="IPR044666">
    <property type="entry name" value="Cyclophilin_A-like"/>
</dbReference>
<dbReference type="PANTHER" id="PTHR45625">
    <property type="entry name" value="PEPTIDYL-PROLYL CIS-TRANS ISOMERASE-RELATED"/>
    <property type="match status" value="1"/>
</dbReference>
<dbReference type="PANTHER" id="PTHR45625:SF4">
    <property type="entry name" value="PEPTIDYLPROLYL ISOMERASE DOMAIN AND WD REPEAT-CONTAINING PROTEIN 1"/>
    <property type="match status" value="1"/>
</dbReference>
<dbReference type="Pfam" id="PF00160">
    <property type="entry name" value="Pro_isomerase"/>
    <property type="match status" value="1"/>
</dbReference>
<dbReference type="PIRSF" id="PIRSF001467">
    <property type="entry name" value="Peptidylpro_ismrse"/>
    <property type="match status" value="1"/>
</dbReference>
<dbReference type="PRINTS" id="PR00153">
    <property type="entry name" value="CSAPPISMRASE"/>
</dbReference>
<dbReference type="SUPFAM" id="SSF50891">
    <property type="entry name" value="Cyclophilin-like"/>
    <property type="match status" value="1"/>
</dbReference>
<dbReference type="PROSITE" id="PS00170">
    <property type="entry name" value="CSA_PPIASE_1"/>
    <property type="match status" value="1"/>
</dbReference>
<dbReference type="PROSITE" id="PS50072">
    <property type="entry name" value="CSA_PPIASE_2"/>
    <property type="match status" value="1"/>
</dbReference>
<evidence type="ECO:0000250" key="1"/>
<evidence type="ECO:0000255" key="2">
    <source>
        <dbReference type="PROSITE-ProRule" id="PRU00156"/>
    </source>
</evidence>
<evidence type="ECO:0000305" key="3"/>
<comment type="function">
    <text evidence="1">PPIases accelerate the folding of proteins. It catalyzes the cis-trans isomerization of proline imidic peptide bonds in oligopeptides (By similarity).</text>
</comment>
<comment type="catalytic activity">
    <reaction>
        <text>[protein]-peptidylproline (omega=180) = [protein]-peptidylproline (omega=0)</text>
        <dbReference type="Rhea" id="RHEA:16237"/>
        <dbReference type="Rhea" id="RHEA-COMP:10747"/>
        <dbReference type="Rhea" id="RHEA-COMP:10748"/>
        <dbReference type="ChEBI" id="CHEBI:83833"/>
        <dbReference type="ChEBI" id="CHEBI:83834"/>
        <dbReference type="EC" id="5.2.1.8"/>
    </reaction>
</comment>
<comment type="similarity">
    <text evidence="3">Belongs to the cyclophilin-type PPIase family. PPIL1 subfamily.</text>
</comment>
<feature type="chain" id="PRO_0000232964" description="Peptidyl-prolyl cis-trans isomerase-like 1">
    <location>
        <begin position="1"/>
        <end position="174"/>
    </location>
</feature>
<feature type="domain" description="PPIase cyclophilin-type" evidence="2">
    <location>
        <begin position="5"/>
        <end position="159"/>
    </location>
</feature>
<name>PPIL1_CRYNJ</name>
<sequence>MSGPSPTYVTFDTSVGSFTVELYTAHAPKTCNNFAKLAERGYYNGVIFHRIIPNFMIQGGDPTGTGRGGTSIYGDRFADEIHPELRFVGAGILAMANSGPNTNGSQFFITCAPTPYLDGKHTIFGRVSSGMKTIQRLEAVRTDKDDRPVEEIKIHRARLGDATQGGGLAVAMPA</sequence>
<protein>
    <recommendedName>
        <fullName>Peptidyl-prolyl cis-trans isomerase-like 1</fullName>
        <shortName>PPIase</shortName>
        <ecNumber>5.2.1.8</ecNumber>
    </recommendedName>
    <alternativeName>
        <fullName>Rotamase</fullName>
    </alternativeName>
</protein>
<keyword id="KW-0413">Isomerase</keyword>
<keyword id="KW-1185">Reference proteome</keyword>
<keyword id="KW-0697">Rotamase</keyword>